<name>MSHA_MYCSK</name>
<keyword id="KW-0328">Glycosyltransferase</keyword>
<keyword id="KW-0460">Magnesium</keyword>
<keyword id="KW-0479">Metal-binding</keyword>
<keyword id="KW-0808">Transferase</keyword>
<reference key="1">
    <citation type="submission" date="2006-12" db="EMBL/GenBank/DDBJ databases">
        <title>Complete sequence of chromosome of Mycobacterium sp. KMS.</title>
        <authorList>
            <consortium name="US DOE Joint Genome Institute"/>
            <person name="Copeland A."/>
            <person name="Lucas S."/>
            <person name="Lapidus A."/>
            <person name="Barry K."/>
            <person name="Detter J.C."/>
            <person name="Glavina del Rio T."/>
            <person name="Hammon N."/>
            <person name="Israni S."/>
            <person name="Dalin E."/>
            <person name="Tice H."/>
            <person name="Pitluck S."/>
            <person name="Kiss H."/>
            <person name="Brettin T."/>
            <person name="Bruce D."/>
            <person name="Han C."/>
            <person name="Tapia R."/>
            <person name="Gilna P."/>
            <person name="Schmutz J."/>
            <person name="Larimer F."/>
            <person name="Land M."/>
            <person name="Hauser L."/>
            <person name="Kyrpides N."/>
            <person name="Mikhailova N."/>
            <person name="Miller C.D."/>
            <person name="Richardson P."/>
        </authorList>
    </citation>
    <scope>NUCLEOTIDE SEQUENCE [LARGE SCALE GENOMIC DNA]</scope>
    <source>
        <strain>KMS</strain>
    </source>
</reference>
<organism>
    <name type="scientific">Mycobacterium sp. (strain KMS)</name>
    <dbReference type="NCBI Taxonomy" id="189918"/>
    <lineage>
        <taxon>Bacteria</taxon>
        <taxon>Bacillati</taxon>
        <taxon>Actinomycetota</taxon>
        <taxon>Actinomycetes</taxon>
        <taxon>Mycobacteriales</taxon>
        <taxon>Mycobacteriaceae</taxon>
        <taxon>Mycobacterium</taxon>
    </lineage>
</organism>
<comment type="function">
    <text evidence="1">Catalyzes the transfer of a N-acetyl-glucosamine moiety to 1D-myo-inositol 3-phosphate to produce 1D-myo-inositol 2-acetamido-2-deoxy-glucopyranoside 3-phosphate in the mycothiol biosynthesis pathway.</text>
</comment>
<comment type="catalytic activity">
    <reaction evidence="1">
        <text>1D-myo-inositol 3-phosphate + UDP-N-acetyl-alpha-D-glucosamine = 1D-myo-inositol 2-acetamido-2-deoxy-alpha-D-glucopyranoside 3-phosphate + UDP + H(+)</text>
        <dbReference type="Rhea" id="RHEA:26188"/>
        <dbReference type="ChEBI" id="CHEBI:15378"/>
        <dbReference type="ChEBI" id="CHEBI:57705"/>
        <dbReference type="ChEBI" id="CHEBI:58223"/>
        <dbReference type="ChEBI" id="CHEBI:58401"/>
        <dbReference type="ChEBI" id="CHEBI:58892"/>
        <dbReference type="EC" id="2.4.1.250"/>
    </reaction>
</comment>
<comment type="subunit">
    <text evidence="1">Homodimer.</text>
</comment>
<comment type="similarity">
    <text evidence="1">Belongs to the glycosyltransferase group 1 family. MshA subfamily.</text>
</comment>
<sequence>MRLATDQLGRPPQRVAVLSVHTSPLAQPGTGDAGGMNVYVLQSALHMARRGVEVEIFTRATTSADPPVVRVAPGVLVRNVVAGPFEGLDKYDLPTQLCAFTAGVLRAEATHEPGYYDIVHSHYWLSGQVGWLARDRWAVPLVHTAHTLAAVKNAALAEGDSPEPPLRAVGEQQVVDEADRLIVNTELEAEQLVSLHNADPSRIDVVHPGVDLDTFTPGDRAAARAALGLDPRETVVAFVGRIQPLKAPDILLRAAAKLPDVRVLVAGGPSGSGLAAPDNLVALADELGISERVTFLPPQSREDLVRVYRAADLVAVPSYSESFGLVAVEAQACGTPVVAAAVGGLPVAVRDGVTGALVDGHDVGDWAHTIDSLLSRGPATMRRAAVEHAATFSWAHTVDDLLASYGRAISDYRDRHPHADETLSRRTARRFSRRRGVRA</sequence>
<feature type="chain" id="PRO_0000400139" description="D-inositol 3-phosphate glycosyltransferase">
    <location>
        <begin position="1"/>
        <end position="439"/>
    </location>
</feature>
<feature type="binding site" evidence="1">
    <location>
        <position position="21"/>
    </location>
    <ligand>
        <name>1D-myo-inositol 3-phosphate</name>
        <dbReference type="ChEBI" id="CHEBI:58401"/>
    </ligand>
</feature>
<feature type="binding site" evidence="1">
    <location>
        <begin position="27"/>
        <end position="28"/>
    </location>
    <ligand>
        <name>UDP-N-acetyl-alpha-D-glucosamine</name>
        <dbReference type="ChEBI" id="CHEBI:57705"/>
    </ligand>
</feature>
<feature type="binding site" evidence="1">
    <location>
        <begin position="32"/>
        <end position="37"/>
    </location>
    <ligand>
        <name>1D-myo-inositol 3-phosphate</name>
        <dbReference type="ChEBI" id="CHEBI:58401"/>
    </ligand>
</feature>
<feature type="binding site" evidence="1">
    <location>
        <position position="35"/>
    </location>
    <ligand>
        <name>UDP-N-acetyl-alpha-D-glucosamine</name>
        <dbReference type="ChEBI" id="CHEBI:57705"/>
    </ligand>
</feature>
<feature type="binding site" evidence="1">
    <location>
        <position position="90"/>
    </location>
    <ligand>
        <name>1D-myo-inositol 3-phosphate</name>
        <dbReference type="ChEBI" id="CHEBI:58401"/>
    </ligand>
</feature>
<feature type="binding site" evidence="1">
    <location>
        <position position="123"/>
    </location>
    <ligand>
        <name>1D-myo-inositol 3-phosphate</name>
        <dbReference type="ChEBI" id="CHEBI:58401"/>
    </ligand>
</feature>
<feature type="binding site" evidence="1">
    <location>
        <position position="147"/>
    </location>
    <ligand>
        <name>1D-myo-inositol 3-phosphate</name>
        <dbReference type="ChEBI" id="CHEBI:58401"/>
    </ligand>
</feature>
<feature type="binding site" evidence="1">
    <location>
        <position position="167"/>
    </location>
    <ligand>
        <name>1D-myo-inositol 3-phosphate</name>
        <dbReference type="ChEBI" id="CHEBI:58401"/>
    </ligand>
</feature>
<feature type="binding site" evidence="1">
    <location>
        <position position="241"/>
    </location>
    <ligand>
        <name>UDP-N-acetyl-alpha-D-glucosamine</name>
        <dbReference type="ChEBI" id="CHEBI:57705"/>
    </ligand>
</feature>
<feature type="binding site" evidence="1">
    <location>
        <position position="246"/>
    </location>
    <ligand>
        <name>UDP-N-acetyl-alpha-D-glucosamine</name>
        <dbReference type="ChEBI" id="CHEBI:57705"/>
    </ligand>
</feature>
<feature type="binding site" evidence="1">
    <location>
        <position position="299"/>
    </location>
    <ligand>
        <name>UDP-N-acetyl-alpha-D-glucosamine</name>
        <dbReference type="ChEBI" id="CHEBI:57705"/>
    </ligand>
</feature>
<feature type="binding site" evidence="1">
    <location>
        <position position="308"/>
    </location>
    <ligand>
        <name>Mg(2+)</name>
        <dbReference type="ChEBI" id="CHEBI:18420"/>
    </ligand>
</feature>
<feature type="binding site" evidence="1">
    <location>
        <position position="309"/>
    </location>
    <ligand>
        <name>Mg(2+)</name>
        <dbReference type="ChEBI" id="CHEBI:18420"/>
    </ligand>
</feature>
<feature type="binding site" evidence="1">
    <location>
        <position position="311"/>
    </location>
    <ligand>
        <name>Mg(2+)</name>
        <dbReference type="ChEBI" id="CHEBI:18420"/>
    </ligand>
</feature>
<feature type="binding site" evidence="1">
    <location>
        <position position="321"/>
    </location>
    <ligand>
        <name>UDP-N-acetyl-alpha-D-glucosamine</name>
        <dbReference type="ChEBI" id="CHEBI:57705"/>
    </ligand>
</feature>
<feature type="binding site" evidence="1">
    <location>
        <position position="329"/>
    </location>
    <ligand>
        <name>UDP-N-acetyl-alpha-D-glucosamine</name>
        <dbReference type="ChEBI" id="CHEBI:57705"/>
    </ligand>
</feature>
<feature type="binding site" evidence="1">
    <location>
        <position position="335"/>
    </location>
    <ligand>
        <name>Mg(2+)</name>
        <dbReference type="ChEBI" id="CHEBI:18420"/>
    </ligand>
</feature>
<protein>
    <recommendedName>
        <fullName>D-inositol 3-phosphate glycosyltransferase</fullName>
        <ecNumber evidence="1">2.4.1.250</ecNumber>
    </recommendedName>
    <alternativeName>
        <fullName evidence="1">N-acetylglucosamine-inositol-phosphate N-acetylglucosaminyltransferase</fullName>
        <shortName evidence="1">GlcNAc-Ins-P N-acetylglucosaminyltransferase</shortName>
    </alternativeName>
</protein>
<accession>A1UAM8</accession>
<proteinExistence type="inferred from homology"/>
<dbReference type="EC" id="2.4.1.250" evidence="1"/>
<dbReference type="EMBL" id="CP000518">
    <property type="protein sequence ID" value="ABL89886.1"/>
    <property type="molecule type" value="Genomic_DNA"/>
</dbReference>
<dbReference type="SMR" id="A1UAM8"/>
<dbReference type="STRING" id="189918.Mkms_0670"/>
<dbReference type="CAZy" id="GT4">
    <property type="family name" value="Glycosyltransferase Family 4"/>
</dbReference>
<dbReference type="KEGG" id="mkm:Mkms_0670"/>
<dbReference type="HOGENOM" id="CLU_009583_2_3_11"/>
<dbReference type="OrthoDB" id="9810929at2"/>
<dbReference type="GO" id="GO:0008375">
    <property type="term" value="F:acetylglucosaminyltransferase activity"/>
    <property type="evidence" value="ECO:0007669"/>
    <property type="project" value="UniProtKB-UniRule"/>
</dbReference>
<dbReference type="GO" id="GO:0102710">
    <property type="term" value="F:D-inositol-3-phosphate glycosyltransferase activity"/>
    <property type="evidence" value="ECO:0007669"/>
    <property type="project" value="UniProtKB-EC"/>
</dbReference>
<dbReference type="GO" id="GO:0000287">
    <property type="term" value="F:magnesium ion binding"/>
    <property type="evidence" value="ECO:0007669"/>
    <property type="project" value="UniProtKB-UniRule"/>
</dbReference>
<dbReference type="GO" id="GO:0010125">
    <property type="term" value="P:mycothiol biosynthetic process"/>
    <property type="evidence" value="ECO:0007669"/>
    <property type="project" value="UniProtKB-UniRule"/>
</dbReference>
<dbReference type="CDD" id="cd03800">
    <property type="entry name" value="GT4_sucrose_synthase"/>
    <property type="match status" value="1"/>
</dbReference>
<dbReference type="FunFam" id="3.40.50.2000:FF:000123">
    <property type="entry name" value="D-inositol-3-phosphate glycosyltransferase"/>
    <property type="match status" value="1"/>
</dbReference>
<dbReference type="Gene3D" id="3.40.50.2000">
    <property type="entry name" value="Glycogen Phosphorylase B"/>
    <property type="match status" value="2"/>
</dbReference>
<dbReference type="HAMAP" id="MF_01695">
    <property type="entry name" value="MshA"/>
    <property type="match status" value="1"/>
</dbReference>
<dbReference type="InterPro" id="IPR001296">
    <property type="entry name" value="Glyco_trans_1"/>
</dbReference>
<dbReference type="InterPro" id="IPR028098">
    <property type="entry name" value="Glyco_trans_4-like_N"/>
</dbReference>
<dbReference type="InterPro" id="IPR017814">
    <property type="entry name" value="Mycothiol_biosynthesis_MshA"/>
</dbReference>
<dbReference type="NCBIfam" id="TIGR03449">
    <property type="entry name" value="mycothiol_MshA"/>
    <property type="match status" value="1"/>
</dbReference>
<dbReference type="PANTHER" id="PTHR12526:SF510">
    <property type="entry name" value="D-INOSITOL 3-PHOSPHATE GLYCOSYLTRANSFERASE"/>
    <property type="match status" value="1"/>
</dbReference>
<dbReference type="PANTHER" id="PTHR12526">
    <property type="entry name" value="GLYCOSYLTRANSFERASE"/>
    <property type="match status" value="1"/>
</dbReference>
<dbReference type="Pfam" id="PF13579">
    <property type="entry name" value="Glyco_trans_4_4"/>
    <property type="match status" value="1"/>
</dbReference>
<dbReference type="Pfam" id="PF00534">
    <property type="entry name" value="Glycos_transf_1"/>
    <property type="match status" value="1"/>
</dbReference>
<dbReference type="SUPFAM" id="SSF53756">
    <property type="entry name" value="UDP-Glycosyltransferase/glycogen phosphorylase"/>
    <property type="match status" value="1"/>
</dbReference>
<evidence type="ECO:0000255" key="1">
    <source>
        <dbReference type="HAMAP-Rule" id="MF_01695"/>
    </source>
</evidence>
<gene>
    <name evidence="1" type="primary">mshA</name>
    <name type="ordered locus">Mkms_0670</name>
</gene>